<evidence type="ECO:0000250" key="1"/>
<evidence type="ECO:0000255" key="2"/>
<evidence type="ECO:0000305" key="3"/>
<dbReference type="EMBL" id="AE005174">
    <property type="protein sequence ID" value="AAG58231.1"/>
    <property type="molecule type" value="Genomic_DNA"/>
</dbReference>
<dbReference type="EMBL" id="BA000007">
    <property type="protein sequence ID" value="BAB37403.1"/>
    <property type="molecule type" value="Genomic_DNA"/>
</dbReference>
<dbReference type="PIR" id="C85971">
    <property type="entry name" value="C85971"/>
</dbReference>
<dbReference type="PIR" id="D91126">
    <property type="entry name" value="D91126"/>
</dbReference>
<dbReference type="RefSeq" id="NP_312007.1">
    <property type="nucleotide sequence ID" value="NC_002695.1"/>
</dbReference>
<dbReference type="RefSeq" id="WP_000031415.1">
    <property type="nucleotide sequence ID" value="NZ_VOAI01000009.1"/>
</dbReference>
<dbReference type="SMR" id="P64583"/>
<dbReference type="STRING" id="155864.Z4452"/>
<dbReference type="GeneID" id="916205"/>
<dbReference type="KEGG" id="ece:Z4452"/>
<dbReference type="KEGG" id="ecs:ECs_3980"/>
<dbReference type="PATRIC" id="fig|386585.9.peg.4154"/>
<dbReference type="eggNOG" id="COG4575">
    <property type="taxonomic scope" value="Bacteria"/>
</dbReference>
<dbReference type="HOGENOM" id="CLU_132623_4_2_6"/>
<dbReference type="OMA" id="VHENPWK"/>
<dbReference type="Proteomes" id="UP000000558">
    <property type="component" value="Chromosome"/>
</dbReference>
<dbReference type="Proteomes" id="UP000002519">
    <property type="component" value="Chromosome"/>
</dbReference>
<dbReference type="GO" id="GO:0005886">
    <property type="term" value="C:plasma membrane"/>
    <property type="evidence" value="ECO:0007669"/>
    <property type="project" value="UniProtKB-SubCell"/>
</dbReference>
<dbReference type="GO" id="GO:0043022">
    <property type="term" value="F:ribosome binding"/>
    <property type="evidence" value="ECO:0007669"/>
    <property type="project" value="InterPro"/>
</dbReference>
<dbReference type="InterPro" id="IPR043605">
    <property type="entry name" value="DUF883_C"/>
</dbReference>
<dbReference type="InterPro" id="IPR043604">
    <property type="entry name" value="DUF883_N"/>
</dbReference>
<dbReference type="InterPro" id="IPR010279">
    <property type="entry name" value="YqjD/ElaB"/>
</dbReference>
<dbReference type="PANTHER" id="PTHR35893:SF3">
    <property type="entry name" value="INNER MEMBRANE PROTEIN"/>
    <property type="match status" value="1"/>
</dbReference>
<dbReference type="PANTHER" id="PTHR35893">
    <property type="entry name" value="INNER MEMBRANE PROTEIN-RELATED"/>
    <property type="match status" value="1"/>
</dbReference>
<dbReference type="Pfam" id="PF05957">
    <property type="entry name" value="DUF883"/>
    <property type="match status" value="1"/>
</dbReference>
<dbReference type="Pfam" id="PF19029">
    <property type="entry name" value="DUF883_C"/>
    <property type="match status" value="1"/>
</dbReference>
<organism>
    <name type="scientific">Escherichia coli O157:H7</name>
    <dbReference type="NCBI Taxonomy" id="83334"/>
    <lineage>
        <taxon>Bacteria</taxon>
        <taxon>Pseudomonadati</taxon>
        <taxon>Pseudomonadota</taxon>
        <taxon>Gammaproteobacteria</taxon>
        <taxon>Enterobacterales</taxon>
        <taxon>Enterobacteriaceae</taxon>
        <taxon>Escherichia</taxon>
    </lineage>
</organism>
<reference key="1">
    <citation type="journal article" date="2001" name="Nature">
        <title>Genome sequence of enterohaemorrhagic Escherichia coli O157:H7.</title>
        <authorList>
            <person name="Perna N.T."/>
            <person name="Plunkett G. III"/>
            <person name="Burland V."/>
            <person name="Mau B."/>
            <person name="Glasner J.D."/>
            <person name="Rose D.J."/>
            <person name="Mayhew G.F."/>
            <person name="Evans P.S."/>
            <person name="Gregor J."/>
            <person name="Kirkpatrick H.A."/>
            <person name="Posfai G."/>
            <person name="Hackett J."/>
            <person name="Klink S."/>
            <person name="Boutin A."/>
            <person name="Shao Y."/>
            <person name="Miller L."/>
            <person name="Grotbeck E.J."/>
            <person name="Davis N.W."/>
            <person name="Lim A."/>
            <person name="Dimalanta E.T."/>
            <person name="Potamousis K."/>
            <person name="Apodaca J."/>
            <person name="Anantharaman T.S."/>
            <person name="Lin J."/>
            <person name="Yen G."/>
            <person name="Schwartz D.C."/>
            <person name="Welch R.A."/>
            <person name="Blattner F.R."/>
        </authorList>
    </citation>
    <scope>NUCLEOTIDE SEQUENCE [LARGE SCALE GENOMIC DNA]</scope>
    <source>
        <strain>O157:H7 / EDL933 / ATCC 700927 / EHEC</strain>
    </source>
</reference>
<reference key="2">
    <citation type="journal article" date="2001" name="DNA Res.">
        <title>Complete genome sequence of enterohemorrhagic Escherichia coli O157:H7 and genomic comparison with a laboratory strain K-12.</title>
        <authorList>
            <person name="Hayashi T."/>
            <person name="Makino K."/>
            <person name="Ohnishi M."/>
            <person name="Kurokawa K."/>
            <person name="Ishii K."/>
            <person name="Yokoyama K."/>
            <person name="Han C.-G."/>
            <person name="Ohtsubo E."/>
            <person name="Nakayama K."/>
            <person name="Murata T."/>
            <person name="Tanaka M."/>
            <person name="Tobe T."/>
            <person name="Iida T."/>
            <person name="Takami H."/>
            <person name="Honda T."/>
            <person name="Sasakawa C."/>
            <person name="Ogasawara N."/>
            <person name="Yasunaga T."/>
            <person name="Kuhara S."/>
            <person name="Shiba T."/>
            <person name="Hattori M."/>
            <person name="Shinagawa H."/>
        </authorList>
    </citation>
    <scope>NUCLEOTIDE SEQUENCE [LARGE SCALE GENOMIC DNA]</scope>
    <source>
        <strain>O157:H7 / Sakai / RIMD 0509952 / EHEC</strain>
    </source>
</reference>
<comment type="subunit">
    <text evidence="1">Binds to 70S and 100S ribosomes, probably via the 30S subunit. Note=Localizes to one cell pole in stationary phase.</text>
</comment>
<comment type="subcellular location">
    <subcellularLocation>
        <location evidence="3">Cell inner membrane</location>
        <topology evidence="3">Single-pass membrane protein</topology>
    </subcellularLocation>
</comment>
<comment type="similarity">
    <text evidence="3">Belongs to the ElaB/YgaM/YqjD family.</text>
</comment>
<protein>
    <recommendedName>
        <fullName>Uncharacterized protein YqjD</fullName>
    </recommendedName>
</protein>
<feature type="chain" id="PRO_0000169429" description="Uncharacterized protein YqjD">
    <location>
        <begin position="1"/>
        <end position="101"/>
    </location>
</feature>
<feature type="transmembrane region" description="Helical" evidence="2">
    <location>
        <begin position="81"/>
        <end position="98"/>
    </location>
</feature>
<keyword id="KW-0997">Cell inner membrane</keyword>
<keyword id="KW-1003">Cell membrane</keyword>
<keyword id="KW-0472">Membrane</keyword>
<keyword id="KW-1185">Reference proteome</keyword>
<keyword id="KW-0812">Transmembrane</keyword>
<keyword id="KW-1133">Transmembrane helix</keyword>
<accession>P64583</accession>
<accession>P42617</accession>
<sequence length="101" mass="11051">MSKEHTTEHLRAELKSLSDTLEEVLSSSGEKSKEELSKIRSKAEQALKQSRYRLGETGDAIAKQTRVAAARADEYVRENPWTGVGIGAAIGVVLGVLLSRR</sequence>
<proteinExistence type="inferred from homology"/>
<gene>
    <name type="primary">yqjD</name>
    <name type="ordered locus">Z4452</name>
    <name type="ordered locus">ECs3980</name>
</gene>
<name>YQJD_ECO57</name>